<sequence length="402" mass="44934">MTILKASQVKLTARRTGLARLDPSPTGTLELANELLQRNHDSYHMYFRDVGGHNHIAHSVLSVLAMGGGPKELNRAYDDGYGYQRPLPALNFLHFFESEIDAKGWQAVLQEYCFSRTPLAEAMFSQLYEGLLHPIIHLGFGIEFEQPSIIAEGLAHAASHDPGNIDTFFLRSEELARSGSVPAKPLVELYEEVRRNEKTRTAGRMQDGPFRLRDGPLARSMDEIVHIAAQFQIKPEDLERGTAEMINCAAYSAGRRSGPASVLVKQSWIKLEDRIRLVEWKARLDLAWYAANGAAELRLEDISGYEPTASKGMEWHALYKAVNEVHDDGHIAKFVRALKNGETVSAPFEQGDGADAFPIKGDLWLRIAQMGYDTTKDGHDNSDKWVWGAGFDLAWMKVPDSQ</sequence>
<accession>E1ACQ8</accession>
<organism>
    <name type="scientific">Aspergillus sp. (strain MF297-2)</name>
    <dbReference type="NCBI Taxonomy" id="877550"/>
    <lineage>
        <taxon>Eukaryota</taxon>
        <taxon>Fungi</taxon>
        <taxon>Dikarya</taxon>
        <taxon>Ascomycota</taxon>
        <taxon>Pezizomycotina</taxon>
        <taxon>Eurotiomycetes</taxon>
        <taxon>Eurotiomycetidae</taxon>
        <taxon>Eurotiales</taxon>
        <taxon>Aspergillaceae</taxon>
        <taxon>Aspergillus</taxon>
    </lineage>
</organism>
<dbReference type="EC" id="1.-.-.-" evidence="5"/>
<dbReference type="EMBL" id="HM622670">
    <property type="protein sequence ID" value="ADM34146.1"/>
    <property type="molecule type" value="Genomic_DNA"/>
</dbReference>
<dbReference type="SMR" id="E1ACQ8"/>
<dbReference type="GO" id="GO:0016491">
    <property type="term" value="F:oxidoreductase activity"/>
    <property type="evidence" value="ECO:0007669"/>
    <property type="project" value="UniProtKB-KW"/>
</dbReference>
<dbReference type="InterPro" id="IPR025337">
    <property type="entry name" value="Questin_oxidase-like"/>
</dbReference>
<dbReference type="PANTHER" id="PTHR35870:SF7">
    <property type="entry name" value="BAEYER-VILLIGER OXIDASE MDPL"/>
    <property type="match status" value="1"/>
</dbReference>
<dbReference type="PANTHER" id="PTHR35870">
    <property type="entry name" value="PROTEIN, PUTATIVE (AFU_ORTHOLOGUE AFUA_5G03330)-RELATED"/>
    <property type="match status" value="1"/>
</dbReference>
<dbReference type="Pfam" id="PF14027">
    <property type="entry name" value="Questin_oxidase"/>
    <property type="match status" value="2"/>
</dbReference>
<proteinExistence type="evidence at protein level"/>
<reference key="1">
    <citation type="journal article" date="2010" name="J. Am. Chem. Soc.">
        <title>Genome-based characterization of two prenylation steps in the assembly of the stephacidin and notoamide anticancer agents in a marine-derived Aspergillus sp.</title>
        <authorList>
            <person name="Ding Y."/>
            <person name="de Wet J.R."/>
            <person name="Cavalcoli J."/>
            <person name="Li S."/>
            <person name="Greshock T.J."/>
            <person name="Miller K.A."/>
            <person name="Finefield J.M."/>
            <person name="Sunderhaus J.D."/>
            <person name="McAfoos T.J."/>
            <person name="Tsukamoto S."/>
            <person name="Williams R.M."/>
            <person name="Sherman D.H."/>
        </authorList>
    </citation>
    <scope>NUCLEOTIDE SEQUENCE [GENOMIC DNA]</scope>
    <source>
        <strain>MF297-2</strain>
    </source>
</reference>
<reference key="2">
    <citation type="journal article" date="2007" name="Angew. Chem. Int. Ed.">
        <title>Notoamides A-D: prenylated indole alkaloids isolated from a marine-derived fungus, Aspergillus sp.</title>
        <authorList>
            <person name="Kato H."/>
            <person name="Yoshida T."/>
            <person name="Tokue T."/>
            <person name="Nojiri Y."/>
            <person name="Hirota H."/>
            <person name="Ohta T."/>
            <person name="Williams R.M."/>
            <person name="Tsukamoto S."/>
        </authorList>
    </citation>
    <scope>BIOTECHNOLOGY</scope>
</reference>
<reference key="3">
    <citation type="journal article" date="2012" name="J. Am. Chem. Soc.">
        <title>Biochemical characterization of NotB as an FAD-dependent oxidase in the biosynthesis of notoamide indole alkaloids.</title>
        <authorList>
            <person name="Li S."/>
            <person name="Finefield J.M."/>
            <person name="Sunderhaus J.D."/>
            <person name="McAfoos T.J."/>
            <person name="Williams R.M."/>
            <person name="Sherman D.H."/>
        </authorList>
    </citation>
    <scope>FUNCTION</scope>
</reference>
<reference key="4">
    <citation type="journal article" date="2012" name="Med. Chem. Commun.">
        <title>Comparative analysis of the biosynthetic systems for fungal bicyclo[2.2.2]diazaoctane indole alkaloids: the (+)/(-)-notoamide, paraherquamide and malbrancheamide pathways.</title>
        <authorList>
            <person name="Li S."/>
            <person name="Anand K."/>
            <person name="Tran H."/>
            <person name="Yu F."/>
            <person name="Finefield J.M."/>
            <person name="Sunderhaus J.D."/>
            <person name="McAfoos T.J."/>
            <person name="Tsukamoto S."/>
            <person name="Williams R.M."/>
            <person name="Sherman D.H."/>
        </authorList>
    </citation>
    <scope>FUNCTION</scope>
</reference>
<gene>
    <name evidence="4" type="primary">notM</name>
</gene>
<name>NOTM_ASPSM</name>
<feature type="chain" id="PRO_0000448822" description="Baeyer-Villiger oxidase notM">
    <location>
        <begin position="1"/>
        <end position="402"/>
    </location>
</feature>
<evidence type="ECO:0000269" key="1">
    <source>
    </source>
</evidence>
<evidence type="ECO:0000269" key="2">
    <source>
    </source>
</evidence>
<evidence type="ECO:0000269" key="3">
    <source>
    </source>
</evidence>
<evidence type="ECO:0000303" key="4">
    <source>
    </source>
</evidence>
<evidence type="ECO:0000305" key="5"/>
<evidence type="ECO:0000305" key="6">
    <source>
    </source>
</evidence>
<keyword id="KW-0560">Oxidoreductase</keyword>
<comment type="function">
    <text evidence="2 3 6">Baeyer-Villiger oxidase; part of the gene cluster that mediates the biosynthesis of notoamide, a fungal indole alkaloid that belongs to a family of natural products containing a characteristic bicyclo[2.2.2]diazaoctane core (PubMed:20722388). The first step of notoamide biosynthesis involves coupling of L-proline and L-tryptophan by the bimodular NRPS notE, to produce cyclo-L-tryptophan-L-proline called brevianamide F (PubMed:20722388). The reverse prenyltransferase notF then acts as a deoxybrevianamide E synthase and converts brevianamide F to deoxybrevianamide E via reverse prenylation at C-2 of the indole ring leading to the bicyclo[2.2.2]diazaoctane core (PubMed:20722388). Deoxybrevianamide E is further hydroxylated at C-6 of the indole ring, likely catalyzed by the cytochrome P450 monooxygenase notG, to yield 6-hydroxy-deoxybrevianamide E (Probable). 6-hydroxy-deoxybrevianamide E is a specific substrate of the prenyltransferase notC for normal prenylation at C-7 to produce 6-hydroxy-7-prenyl-deoxybrevianamide, also called notoamide S (PubMed:20722388). As the proposed pivotal branching point in notoamide biosynthesis, notoamide S can be diverted to notoamide E through an oxidative pyran ring closure putatively catalyzed by either notH cytochrome P450 monooxygenase or the notD FAD-linked oxidoreductase (Probable). This step would be followed by an indole 2,3-epoxidation-initiated pinacol-like rearrangement catalyzed by the notB FAD-dependent monooxygenase leading to the formation of notoamide C and notoamide D (PubMed:22188465). On the other hand notoamide S is converted to notoamide T by notH (or notD), a bifunctional oxidase that also functions as the intramolecular Diels-Alderase responsible for generation of (+)-notoamide T (Probable). To generate antipodal (-)-notoaminide T, notH' (or notD') in Aspergillus versicolor is expected to catalyze a Diels-Alder reaction leading to the opposite stereochemistry (Probable). The remaining oxidoreductase notD (or notH) likely catalyzes the oxidative pyran ring formation to yield (+)-stephacidin A (Probable). The FAD-dependent monooxygenase notI is highly similar to notB and is predicted to catalyze a similar conversion from (+)-stephacidin A to (-)-notoamide B via the 2,3-epoxidation of (+)-stephacidin A followed by a pinacol-type rearrangement (Probable). Finally, it remains unclear which enzyme could be responsible for the final hydroxylation steps leading to notoamide A and sclerotiamide (Probable). The function of notM in the notoamide biosynthesis has not been determined yet (Probable).</text>
</comment>
<comment type="biotechnology">
    <text evidence="1">Notoamides have been shown to exhibit antitumoral activities (PubMed:17304611). Notoamides A-C show moderate cytotoxicity against HeLa and L1210 cells with IC(50) values in the range of 22-52 mg/ml, but the IC(50) value of notoamide D is greater than 100 mg/ml (PubMed:17304611). Moreover, notoamide C induces G2/M-cell cycle arrest at a concentration of 6.3 mg/ml (PubMed:17304611).</text>
</comment>
<comment type="similarity">
    <text evidence="5">Belongs to the questin oxidase family.</text>
</comment>
<protein>
    <recommendedName>
        <fullName evidence="4">Baeyer-Villiger oxidase notM</fullName>
        <ecNumber evidence="5">1.-.-.-</ecNumber>
    </recommendedName>
    <alternativeName>
        <fullName evidence="4">Notoamide biosynthesis cluster protein M</fullName>
    </alternativeName>
</protein>